<protein>
    <recommendedName>
        <fullName>Antimicrobial protein PN-AMP1</fullName>
    </recommendedName>
    <component>
        <recommendedName>
            <fullName>Antimicrobial protein PN-AMP2</fullName>
        </recommendedName>
    </component>
</protein>
<organism>
    <name type="scientific">Ipomoea nil</name>
    <name type="common">Japanese morning glory</name>
    <name type="synonym">Pharbitis nil</name>
    <dbReference type="NCBI Taxonomy" id="35883"/>
    <lineage>
        <taxon>Eukaryota</taxon>
        <taxon>Viridiplantae</taxon>
        <taxon>Streptophyta</taxon>
        <taxon>Embryophyta</taxon>
        <taxon>Tracheophyta</taxon>
        <taxon>Spermatophyta</taxon>
        <taxon>Magnoliopsida</taxon>
        <taxon>eudicotyledons</taxon>
        <taxon>Gunneridae</taxon>
        <taxon>Pentapetalae</taxon>
        <taxon>asterids</taxon>
        <taxon>lamiids</taxon>
        <taxon>Solanales</taxon>
        <taxon>Convolvulaceae</taxon>
        <taxon>Ipomoeeae</taxon>
        <taxon>Ipomoea</taxon>
    </lineage>
</organism>
<name>AMP_IPONI</name>
<reference key="1">
    <citation type="journal article" date="1998" name="Biochim. Biophys. Acta">
        <title>Two hevein homologs isolated from the seed of Pharbitis nil L. exhibit potent antifungal activity.</title>
        <authorList>
            <person name="Koo J.C."/>
            <person name="Lee S.Y."/>
            <person name="Chun H.J."/>
            <person name="Cheong Y.H."/>
            <person name="Choi J.S."/>
            <person name="Kawabata S."/>
            <person name="Miyagi M."/>
            <person name="Tsunasawa S."/>
            <person name="Ha K.S."/>
            <person name="Bae D.W."/>
            <person name="Han C.-D."/>
            <person name="Lee B.L."/>
            <person name="Cho M.J."/>
        </authorList>
    </citation>
    <scope>PROTEIN SEQUENCE</scope>
    <scope>CHARACTERIZATION</scope>
    <scope>PYROGLUTAMATE FORMATION AT GLN-1</scope>
    <scope>MASS SPECTROMETRY</scope>
    <source>
        <tissue>Seed</tissue>
    </source>
</reference>
<sequence>QQCGRQASGRLCGNRLCCSQWGYCGSTASYCGAGCQSQCRS</sequence>
<accession>P81591</accession>
<evidence type="ECO:0000255" key="1">
    <source>
        <dbReference type="PROSITE-ProRule" id="PRU00261"/>
    </source>
</evidence>
<evidence type="ECO:0000269" key="2">
    <source>
    </source>
</evidence>
<evidence type="ECO:0000305" key="3">
    <source>
    </source>
</evidence>
<proteinExistence type="evidence at protein level"/>
<dbReference type="SMR" id="P81591"/>
<dbReference type="CAZy" id="CBM18">
    <property type="family name" value="Carbohydrate-Binding Module Family 18"/>
</dbReference>
<dbReference type="GO" id="GO:0008061">
    <property type="term" value="F:chitin binding"/>
    <property type="evidence" value="ECO:0007669"/>
    <property type="project" value="UniProtKB-KW"/>
</dbReference>
<dbReference type="GO" id="GO:0042742">
    <property type="term" value="P:defense response to bacterium"/>
    <property type="evidence" value="ECO:0007669"/>
    <property type="project" value="UniProtKB-KW"/>
</dbReference>
<dbReference type="GO" id="GO:0050832">
    <property type="term" value="P:defense response to fungus"/>
    <property type="evidence" value="ECO:0007669"/>
    <property type="project" value="UniProtKB-KW"/>
</dbReference>
<dbReference type="GO" id="GO:0031640">
    <property type="term" value="P:killing of cells of another organism"/>
    <property type="evidence" value="ECO:0007669"/>
    <property type="project" value="UniProtKB-KW"/>
</dbReference>
<dbReference type="CDD" id="cd00035">
    <property type="entry name" value="ChtBD1"/>
    <property type="match status" value="1"/>
</dbReference>
<dbReference type="FunFam" id="3.30.60.10:FF:000001">
    <property type="entry name" value="Basic endochitinase"/>
    <property type="match status" value="1"/>
</dbReference>
<dbReference type="Gene3D" id="3.30.60.10">
    <property type="entry name" value="Endochitinase-like"/>
    <property type="match status" value="1"/>
</dbReference>
<dbReference type="InterPro" id="IPR001002">
    <property type="entry name" value="Chitin-bd_1"/>
</dbReference>
<dbReference type="InterPro" id="IPR018371">
    <property type="entry name" value="Chitin-binding_1_CS"/>
</dbReference>
<dbReference type="InterPro" id="IPR036861">
    <property type="entry name" value="Endochitinase-like_sf"/>
</dbReference>
<dbReference type="Pfam" id="PF00187">
    <property type="entry name" value="Chitin_bind_1"/>
    <property type="match status" value="1"/>
</dbReference>
<dbReference type="PRINTS" id="PR00451">
    <property type="entry name" value="CHITINBINDNG"/>
</dbReference>
<dbReference type="SMART" id="SM00270">
    <property type="entry name" value="ChtBD1"/>
    <property type="match status" value="1"/>
</dbReference>
<dbReference type="SUPFAM" id="SSF57016">
    <property type="entry name" value="Plant lectins/antimicrobial peptides"/>
    <property type="match status" value="1"/>
</dbReference>
<dbReference type="PROSITE" id="PS00026">
    <property type="entry name" value="CHIT_BIND_I_1"/>
    <property type="match status" value="1"/>
</dbReference>
<dbReference type="PROSITE" id="PS50941">
    <property type="entry name" value="CHIT_BIND_I_2"/>
    <property type="match status" value="1"/>
</dbReference>
<feature type="chain" id="PRO_0000005278" description="Antimicrobial protein PN-AMP1">
    <location>
        <begin position="1"/>
        <end position="41"/>
    </location>
</feature>
<feature type="chain" id="PRO_0000005279" description="Antimicrobial protein PN-AMP2">
    <location>
        <begin position="1"/>
        <end position="40"/>
    </location>
</feature>
<feature type="domain" description="Chitin-binding type-1" evidence="1">
    <location>
        <begin position="1"/>
        <end position="41"/>
    </location>
</feature>
<feature type="modified residue" description="Pyrrolidone carboxylic acid" evidence="3">
    <location>
        <position position="1"/>
    </location>
</feature>
<feature type="disulfide bond" evidence="1">
    <location>
        <begin position="3"/>
        <end position="18"/>
    </location>
</feature>
<feature type="disulfide bond" evidence="1">
    <location>
        <begin position="12"/>
        <end position="24"/>
    </location>
</feature>
<feature type="disulfide bond" evidence="1">
    <location>
        <begin position="17"/>
        <end position="31"/>
    </location>
</feature>
<feature type="disulfide bond" evidence="1">
    <location>
        <begin position="35"/>
        <end position="39"/>
    </location>
</feature>
<keyword id="KW-0044">Antibiotic</keyword>
<keyword id="KW-0929">Antimicrobial</keyword>
<keyword id="KW-0147">Chitin-binding</keyword>
<keyword id="KW-0903">Direct protein sequencing</keyword>
<keyword id="KW-1015">Disulfide bond</keyword>
<keyword id="KW-0295">Fungicide</keyword>
<keyword id="KW-0611">Plant defense</keyword>
<keyword id="KW-0873">Pyrrolidone carboxylic acid</keyword>
<comment type="function">
    <text>Chitin-binding protein with a defensive function against numerous chitin containing fungal pathogens. It is also an inhibitor of Gram-positive bacteria such as B.subtilis.</text>
</comment>
<comment type="mass spectrometry">
    <molecule>Antimicrobial protein PN-AMP1</molecule>
</comment>
<comment type="mass spectrometry">
    <molecule>Antimicrobial protein PN-AMP2</molecule>
</comment>
<comment type="miscellaneous">
    <text>Its antimicrobial activity is strongly inhibited by divalent cations.</text>
</comment>